<gene>
    <name evidence="1" type="primary">E2</name>
</gene>
<name>VE2_HPV70</name>
<sequence>MKETMMETLSQRLNALQEKILEHYEQDSKLIYDQINYWKYVRLENAIFYAARERGMHTIDHQVVPPGTTSKAKAYQAIELQMALESLAQTDFNKEEWTLKDTSNEMWQTKPKQCFKKKGVTVEVWYDGNKDNSMHYVVWGAIYYKTHTDTWCKTEGYVDYWGIYYVHEQHKTYYEVFKQDAQMYGTSGKWEVHCNGNIIHCPDSMYSTSDDTVPTTELTAELQHTTPAHTAATTPCTKKTKSAPSCKCGVSRPSETDGVFVDLVTSKGCNKRRHQCCGDTTPIVHLKGDKNGLKCLRYRLRKFNSLYENISCTWHWIGGKGSKHTGILTVTYTTEAQRQKFLETVRIPPSVHVSVGYMTL</sequence>
<organismHost>
    <name type="scientific">Homo sapiens</name>
    <name type="common">Human</name>
    <dbReference type="NCBI Taxonomy" id="9606"/>
</organismHost>
<keyword id="KW-0010">Activator</keyword>
<keyword id="KW-0235">DNA replication</keyword>
<keyword id="KW-0238">DNA-binding</keyword>
<keyword id="KW-0244">Early protein</keyword>
<keyword id="KW-1048">Host nucleus</keyword>
<keyword id="KW-1017">Isopeptide bond</keyword>
<keyword id="KW-0597">Phosphoprotein</keyword>
<keyword id="KW-1185">Reference proteome</keyword>
<keyword id="KW-0678">Repressor</keyword>
<keyword id="KW-0804">Transcription</keyword>
<keyword id="KW-0805">Transcription regulation</keyword>
<keyword id="KW-0832">Ubl conjugation</keyword>
<feature type="chain" id="PRO_0000133209" description="Regulatory protein E2">
    <location>
        <begin position="1"/>
        <end position="360"/>
    </location>
</feature>
<feature type="region of interest" description="Transactivation domain" evidence="1">
    <location>
        <begin position="1"/>
        <end position="206"/>
    </location>
</feature>
<feature type="region of interest" description="DNA-binding domain" evidence="1">
    <location>
        <begin position="280"/>
        <end position="360"/>
    </location>
</feature>
<feature type="cross-link" description="Glycyl lysine isopeptide (Lys-Gly) (interchain with G-Cter in SUMO)" evidence="1">
    <location>
        <position position="287"/>
    </location>
</feature>
<organism>
    <name type="scientific">Human papillomavirus type 70</name>
    <dbReference type="NCBI Taxonomy" id="39457"/>
    <lineage>
        <taxon>Viruses</taxon>
        <taxon>Monodnaviria</taxon>
        <taxon>Shotokuvirae</taxon>
        <taxon>Cossaviricota</taxon>
        <taxon>Papovaviricetes</taxon>
        <taxon>Zurhausenvirales</taxon>
        <taxon>Papillomaviridae</taxon>
        <taxon>Firstpapillomavirinae</taxon>
        <taxon>Alphapapillomavirus</taxon>
        <taxon>Alphapapillomavirus 7</taxon>
    </lineage>
</organism>
<dbReference type="EMBL" id="U21941">
    <property type="protein sequence ID" value="AAC54853.1"/>
    <property type="molecule type" value="Genomic_DNA"/>
</dbReference>
<dbReference type="SMR" id="P50773"/>
<dbReference type="Proteomes" id="UP000007677">
    <property type="component" value="Segment"/>
</dbReference>
<dbReference type="GO" id="GO:0042025">
    <property type="term" value="C:host cell nucleus"/>
    <property type="evidence" value="ECO:0007669"/>
    <property type="project" value="UniProtKB-SubCell"/>
</dbReference>
<dbReference type="GO" id="GO:0003677">
    <property type="term" value="F:DNA binding"/>
    <property type="evidence" value="ECO:0007669"/>
    <property type="project" value="UniProtKB-UniRule"/>
</dbReference>
<dbReference type="GO" id="GO:0003700">
    <property type="term" value="F:DNA-binding transcription factor activity"/>
    <property type="evidence" value="ECO:0007669"/>
    <property type="project" value="UniProtKB-UniRule"/>
</dbReference>
<dbReference type="GO" id="GO:0000166">
    <property type="term" value="F:nucleotide binding"/>
    <property type="evidence" value="ECO:0007669"/>
    <property type="project" value="UniProtKB-UniRule"/>
</dbReference>
<dbReference type="GO" id="GO:0006260">
    <property type="term" value="P:DNA replication"/>
    <property type="evidence" value="ECO:0007669"/>
    <property type="project" value="UniProtKB-KW"/>
</dbReference>
<dbReference type="GO" id="GO:0006351">
    <property type="term" value="P:DNA-templated transcription"/>
    <property type="evidence" value="ECO:0007669"/>
    <property type="project" value="UniProtKB-UniRule"/>
</dbReference>
<dbReference type="GO" id="GO:0006275">
    <property type="term" value="P:regulation of DNA replication"/>
    <property type="evidence" value="ECO:0007669"/>
    <property type="project" value="UniProtKB-UniRule"/>
</dbReference>
<dbReference type="GO" id="GO:0039693">
    <property type="term" value="P:viral DNA genome replication"/>
    <property type="evidence" value="ECO:0007669"/>
    <property type="project" value="UniProtKB-UniRule"/>
</dbReference>
<dbReference type="Gene3D" id="3.30.70.330">
    <property type="match status" value="1"/>
</dbReference>
<dbReference type="Gene3D" id="1.10.287.30">
    <property type="entry name" value="E2 (early) protein, N terminal domain, subdomain 1"/>
    <property type="match status" value="1"/>
</dbReference>
<dbReference type="Gene3D" id="2.170.200.10">
    <property type="entry name" value="Papillomavirus E2 early protein domain"/>
    <property type="match status" value="1"/>
</dbReference>
<dbReference type="HAMAP" id="MF_04001">
    <property type="entry name" value="PPV_E2"/>
    <property type="match status" value="1"/>
</dbReference>
<dbReference type="InterPro" id="IPR035975">
    <property type="entry name" value="E2/EBNA1_C_sf"/>
</dbReference>
<dbReference type="InterPro" id="IPR012677">
    <property type="entry name" value="Nucleotide-bd_a/b_plait_sf"/>
</dbReference>
<dbReference type="InterPro" id="IPR000427">
    <property type="entry name" value="Papillomavirus_E2_C"/>
</dbReference>
<dbReference type="InterPro" id="IPR001866">
    <property type="entry name" value="PPV_E2_N"/>
</dbReference>
<dbReference type="InterPro" id="IPR033668">
    <property type="entry name" value="Reg_prot_E2"/>
</dbReference>
<dbReference type="InterPro" id="IPR036050">
    <property type="entry name" value="Regulatory_protein_E2_N"/>
</dbReference>
<dbReference type="InterPro" id="IPR042503">
    <property type="entry name" value="Regulatory_protein_E2_N_1"/>
</dbReference>
<dbReference type="InterPro" id="IPR042504">
    <property type="entry name" value="Regulatory_protein_E2_N_2"/>
</dbReference>
<dbReference type="Pfam" id="PF00511">
    <property type="entry name" value="PPV_E2_C"/>
    <property type="match status" value="1"/>
</dbReference>
<dbReference type="Pfam" id="PF00508">
    <property type="entry name" value="PPV_E2_N"/>
    <property type="match status" value="1"/>
</dbReference>
<dbReference type="SUPFAM" id="SSF51332">
    <property type="entry name" value="E2 regulatory, transactivation domain"/>
    <property type="match status" value="1"/>
</dbReference>
<dbReference type="SUPFAM" id="SSF54957">
    <property type="entry name" value="Viral DNA-binding domain"/>
    <property type="match status" value="1"/>
</dbReference>
<evidence type="ECO:0000255" key="1">
    <source>
        <dbReference type="HAMAP-Rule" id="MF_04001"/>
    </source>
</evidence>
<comment type="function">
    <text evidence="1">Plays a role in the initiation of viral DNA replication. A dimer of E2 interacts with a dimer of E1 in order to improve specificity of E1 DNA binding activity. Once the complex recognizes and binds DNA at specific sites, the E2 dimer is removed from DNA. E2 also regulates viral transcription through binding to the E2RE response element (5'-ACCNNNNNNGGT-3') present in multiple copies in the regulatory regions of the viral genome. Activates or represses transcription depending on E2RE's position with regards to proximal promoter elements including the TATA-box. Repression occurs by sterically hindering the assembly of the transcription initiation complex.</text>
</comment>
<comment type="subunit">
    <text evidence="1">Binds DNA as homodimer. Interacts with protein E1; this interaction greatly increases E1 DNA-binding activity. Interacts with protein L1; this interaction enhances E2-dependent replication and transcription activation. Interacts with protein L2; this interaction inhibits E2 transcriptional activity but not DNA replication function E2. Interacts with protein E7; this interaction inhibits E7 oncogenic activity. Interacts with host TAF1; this interaction modulates E2-dependent transcriptional regulation. Interacts with host BRD4; this interaction mediates E2 transcriptional activation function. Additionally, the interaction with host BRD4 on mitotic chromosomes mediates tethering of the viral genome. Interacts with host TOPBP1; this interaction is required for optimal viral DNA replication.</text>
</comment>
<comment type="subcellular location">
    <subcellularLocation>
        <location evidence="1">Host nucleus</location>
    </subcellularLocation>
</comment>
<comment type="PTM">
    <text evidence="1">Phosphorylated.</text>
</comment>
<comment type="PTM">
    <text evidence="1">Sumoylation plays a regulatory role in E2 transcriptional activity.</text>
</comment>
<comment type="similarity">
    <text evidence="1">Belongs to the papillomaviridae E2 protein family.</text>
</comment>
<proteinExistence type="inferred from homology"/>
<protein>
    <recommendedName>
        <fullName evidence="1">Regulatory protein E2</fullName>
    </recommendedName>
</protein>
<reference key="1">
    <citation type="journal article" date="1996" name="J. Clin. Microbiol.">
        <title>Human papillomavirus type 70 genome cloned from overlapping PCR products: complete nucleotide sequence and genomic organization.</title>
        <authorList>
            <person name="Forslund O."/>
            <person name="Hansson B.G."/>
        </authorList>
    </citation>
    <scope>NUCLEOTIDE SEQUENCE [GENOMIC DNA]</scope>
</reference>
<accession>P50773</accession>